<accession>Q67U69</accession>
<accession>Q0DC42</accession>
<protein>
    <recommendedName>
        <fullName evidence="1">Formate dehydrogenase 2, mitochondrial</fullName>
        <shortName evidence="1">FDH 2</shortName>
        <ecNumber evidence="1">1.17.1.9</ecNumber>
    </recommendedName>
    <alternativeName>
        <fullName evidence="1">NAD-dependent formate dehydrogenase 2</fullName>
    </alternativeName>
</protein>
<name>FDH2_ORYSJ</name>
<dbReference type="EC" id="1.17.1.9" evidence="1"/>
<dbReference type="EMBL" id="AP005656">
    <property type="protein sequence ID" value="BAD38302.1"/>
    <property type="molecule type" value="Genomic_DNA"/>
</dbReference>
<dbReference type="EMBL" id="AP008212">
    <property type="protein sequence ID" value="BAF19581.1"/>
    <property type="molecule type" value="Genomic_DNA"/>
</dbReference>
<dbReference type="EMBL" id="AP014962">
    <property type="protein sequence ID" value="BAS97837.1"/>
    <property type="molecule type" value="Genomic_DNA"/>
</dbReference>
<dbReference type="EMBL" id="CM000143">
    <property type="protein sequence ID" value="EAZ37052.1"/>
    <property type="molecule type" value="Genomic_DNA"/>
</dbReference>
<dbReference type="EMBL" id="AK064610">
    <property type="status" value="NOT_ANNOTATED_CDS"/>
    <property type="molecule type" value="mRNA"/>
</dbReference>
<dbReference type="RefSeq" id="XP_015642621.1">
    <property type="nucleotide sequence ID" value="XM_015787135.1"/>
</dbReference>
<dbReference type="SMR" id="Q67U69"/>
<dbReference type="FunCoup" id="Q67U69">
    <property type="interactions" value="449"/>
</dbReference>
<dbReference type="STRING" id="39947.Q67U69"/>
<dbReference type="PaxDb" id="39947-Q67U69"/>
<dbReference type="EnsemblPlants" id="Os06t0486900-01">
    <property type="protein sequence ID" value="Os06t0486900-01"/>
    <property type="gene ID" value="Os06g0486900"/>
</dbReference>
<dbReference type="Gramene" id="Os06t0486900-01">
    <property type="protein sequence ID" value="Os06t0486900-01"/>
    <property type="gene ID" value="Os06g0486900"/>
</dbReference>
<dbReference type="KEGG" id="dosa:Os06g0486900"/>
<dbReference type="eggNOG" id="KOG0069">
    <property type="taxonomic scope" value="Eukaryota"/>
</dbReference>
<dbReference type="HOGENOM" id="CLU_019796_0_0_1"/>
<dbReference type="InParanoid" id="Q67U69"/>
<dbReference type="OMA" id="VSQCDII"/>
<dbReference type="OrthoDB" id="1621027at2759"/>
<dbReference type="Proteomes" id="UP000000763">
    <property type="component" value="Chromosome 6"/>
</dbReference>
<dbReference type="Proteomes" id="UP000007752">
    <property type="component" value="Chromosome 6"/>
</dbReference>
<dbReference type="Proteomes" id="UP000059680">
    <property type="component" value="Chromosome 6"/>
</dbReference>
<dbReference type="GO" id="GO:0009507">
    <property type="term" value="C:chloroplast"/>
    <property type="evidence" value="ECO:0000318"/>
    <property type="project" value="GO_Central"/>
</dbReference>
<dbReference type="GO" id="GO:0005739">
    <property type="term" value="C:mitochondrion"/>
    <property type="evidence" value="ECO:0007669"/>
    <property type="project" value="UniProtKB-SubCell"/>
</dbReference>
<dbReference type="GO" id="GO:0008863">
    <property type="term" value="F:formate dehydrogenase (NAD+) activity"/>
    <property type="evidence" value="ECO:0000318"/>
    <property type="project" value="GO_Central"/>
</dbReference>
<dbReference type="GO" id="GO:0051287">
    <property type="term" value="F:NAD binding"/>
    <property type="evidence" value="ECO:0007669"/>
    <property type="project" value="InterPro"/>
</dbReference>
<dbReference type="GO" id="GO:0016616">
    <property type="term" value="F:oxidoreductase activity, acting on the CH-OH group of donors, NAD or NADP as acceptor"/>
    <property type="evidence" value="ECO:0007669"/>
    <property type="project" value="InterPro"/>
</dbReference>
<dbReference type="GO" id="GO:0042183">
    <property type="term" value="P:formate catabolic process"/>
    <property type="evidence" value="ECO:0007669"/>
    <property type="project" value="UniProtKB-UniRule"/>
</dbReference>
<dbReference type="CDD" id="cd05302">
    <property type="entry name" value="FDH"/>
    <property type="match status" value="1"/>
</dbReference>
<dbReference type="FunFam" id="3.40.50.720:FF:000057">
    <property type="entry name" value="Formate dehydrogenase"/>
    <property type="match status" value="1"/>
</dbReference>
<dbReference type="FunFam" id="3.40.50.720:FF:001366">
    <property type="entry name" value="Formate dehydrogenase chloroplastic/mitochondrial"/>
    <property type="match status" value="1"/>
</dbReference>
<dbReference type="Gene3D" id="3.40.50.720">
    <property type="entry name" value="NAD(P)-binding Rossmann-like Domain"/>
    <property type="match status" value="2"/>
</dbReference>
<dbReference type="HAMAP" id="MF_03210">
    <property type="entry name" value="Formate_dehydrogenase"/>
    <property type="match status" value="1"/>
</dbReference>
<dbReference type="InterPro" id="IPR006139">
    <property type="entry name" value="D-isomer_2_OHA_DH_cat_dom"/>
</dbReference>
<dbReference type="InterPro" id="IPR029753">
    <property type="entry name" value="D-isomer_DH_CS"/>
</dbReference>
<dbReference type="InterPro" id="IPR029752">
    <property type="entry name" value="D-isomer_DH_CS1"/>
</dbReference>
<dbReference type="InterPro" id="IPR006140">
    <property type="entry name" value="D-isomer_DH_NAD-bd"/>
</dbReference>
<dbReference type="InterPro" id="IPR033689">
    <property type="entry name" value="FDH_NAD-dep"/>
</dbReference>
<dbReference type="InterPro" id="IPR036291">
    <property type="entry name" value="NAD(P)-bd_dom_sf"/>
</dbReference>
<dbReference type="NCBIfam" id="NF005750">
    <property type="entry name" value="PRK07574.1"/>
    <property type="match status" value="1"/>
</dbReference>
<dbReference type="PANTHER" id="PTHR42938">
    <property type="entry name" value="FORMATE DEHYDROGENASE 1"/>
    <property type="match status" value="1"/>
</dbReference>
<dbReference type="PANTHER" id="PTHR42938:SF9">
    <property type="entry name" value="FORMATE DEHYDROGENASE 1"/>
    <property type="match status" value="1"/>
</dbReference>
<dbReference type="Pfam" id="PF00389">
    <property type="entry name" value="2-Hacid_dh"/>
    <property type="match status" value="1"/>
</dbReference>
<dbReference type="Pfam" id="PF02826">
    <property type="entry name" value="2-Hacid_dh_C"/>
    <property type="match status" value="1"/>
</dbReference>
<dbReference type="SUPFAM" id="SSF52283">
    <property type="entry name" value="Formate/glycerate dehydrogenase catalytic domain-like"/>
    <property type="match status" value="1"/>
</dbReference>
<dbReference type="SUPFAM" id="SSF51735">
    <property type="entry name" value="NAD(P)-binding Rossmann-fold domains"/>
    <property type="match status" value="1"/>
</dbReference>
<dbReference type="PROSITE" id="PS00065">
    <property type="entry name" value="D_2_HYDROXYACID_DH_1"/>
    <property type="match status" value="1"/>
</dbReference>
<dbReference type="PROSITE" id="PS00670">
    <property type="entry name" value="D_2_HYDROXYACID_DH_2"/>
    <property type="match status" value="1"/>
</dbReference>
<proteinExistence type="evidence at transcript level"/>
<gene>
    <name type="ordered locus">Os06g0486900</name>
    <name type="ordered locus">LOC_Os06g29220</name>
    <name evidence="3" type="ORF">OsJ_21395</name>
    <name type="ORF">P0404G03.13</name>
</gene>
<keyword id="KW-0496">Mitochondrion</keyword>
<keyword id="KW-0520">NAD</keyword>
<keyword id="KW-0560">Oxidoreductase</keyword>
<keyword id="KW-1185">Reference proteome</keyword>
<keyword id="KW-0809">Transit peptide</keyword>
<sequence>MAMWRAPSAAGQLLGRALASTAAQTSAGSKKVVGVFYKGGEYADKNPNFVGCVDSALGIRGWLESKGHRYIVTDDKEGINCELEKHIEDAHVLITTPFHPAYITAERIKKAKNLELLLTAGVGSDHIDLPAAAAAGLTVAEITGSNTVSVAEDQLMRILLLLRNFLPGHHQIVNGEWNVAGIAHRTYDLEGKTVGTVGAGRIGRLLLQRLKPFNCNLMYHDRVKIDPELEKEIGAKYEEDLDAMLPKCDVVVINMPLTEKTRGMFNKERIAKMKKGVTIVNNARGAIMDTQAVADACASGHVAGYGGDVWFPQPAPKDHPWRYMPNHAMTPHCSGTTIDGQLRYAAGVKDMLDRYFKGEDFPAQNYIVKAGQLASQYQ</sequence>
<organism>
    <name type="scientific">Oryza sativa subsp. japonica</name>
    <name type="common">Rice</name>
    <dbReference type="NCBI Taxonomy" id="39947"/>
    <lineage>
        <taxon>Eukaryota</taxon>
        <taxon>Viridiplantae</taxon>
        <taxon>Streptophyta</taxon>
        <taxon>Embryophyta</taxon>
        <taxon>Tracheophyta</taxon>
        <taxon>Spermatophyta</taxon>
        <taxon>Magnoliopsida</taxon>
        <taxon>Liliopsida</taxon>
        <taxon>Poales</taxon>
        <taxon>Poaceae</taxon>
        <taxon>BOP clade</taxon>
        <taxon>Oryzoideae</taxon>
        <taxon>Oryzeae</taxon>
        <taxon>Oryzinae</taxon>
        <taxon>Oryza</taxon>
        <taxon>Oryza sativa</taxon>
    </lineage>
</organism>
<reference key="1">
    <citation type="journal article" date="2005" name="Nature">
        <title>The map-based sequence of the rice genome.</title>
        <authorList>
            <consortium name="International rice genome sequencing project (IRGSP)"/>
        </authorList>
    </citation>
    <scope>NUCLEOTIDE SEQUENCE [LARGE SCALE GENOMIC DNA]</scope>
    <source>
        <strain>cv. Nipponbare</strain>
    </source>
</reference>
<reference key="2">
    <citation type="journal article" date="2008" name="Nucleic Acids Res.">
        <title>The rice annotation project database (RAP-DB): 2008 update.</title>
        <authorList>
            <consortium name="The rice annotation project (RAP)"/>
        </authorList>
    </citation>
    <scope>GENOME REANNOTATION</scope>
    <source>
        <strain>cv. Nipponbare</strain>
    </source>
</reference>
<reference key="3">
    <citation type="journal article" date="2013" name="Rice">
        <title>Improvement of the Oryza sativa Nipponbare reference genome using next generation sequence and optical map data.</title>
        <authorList>
            <person name="Kawahara Y."/>
            <person name="de la Bastide M."/>
            <person name="Hamilton J.P."/>
            <person name="Kanamori H."/>
            <person name="McCombie W.R."/>
            <person name="Ouyang S."/>
            <person name="Schwartz D.C."/>
            <person name="Tanaka T."/>
            <person name="Wu J."/>
            <person name="Zhou S."/>
            <person name="Childs K.L."/>
            <person name="Davidson R.M."/>
            <person name="Lin H."/>
            <person name="Quesada-Ocampo L."/>
            <person name="Vaillancourt B."/>
            <person name="Sakai H."/>
            <person name="Lee S.S."/>
            <person name="Kim J."/>
            <person name="Numa H."/>
            <person name="Itoh T."/>
            <person name="Buell C.R."/>
            <person name="Matsumoto T."/>
        </authorList>
    </citation>
    <scope>GENOME REANNOTATION</scope>
    <source>
        <strain>cv. Nipponbare</strain>
    </source>
</reference>
<reference key="4">
    <citation type="journal article" date="2005" name="PLoS Biol.">
        <title>The genomes of Oryza sativa: a history of duplications.</title>
        <authorList>
            <person name="Yu J."/>
            <person name="Wang J."/>
            <person name="Lin W."/>
            <person name="Li S."/>
            <person name="Li H."/>
            <person name="Zhou J."/>
            <person name="Ni P."/>
            <person name="Dong W."/>
            <person name="Hu S."/>
            <person name="Zeng C."/>
            <person name="Zhang J."/>
            <person name="Zhang Y."/>
            <person name="Li R."/>
            <person name="Xu Z."/>
            <person name="Li S."/>
            <person name="Li X."/>
            <person name="Zheng H."/>
            <person name="Cong L."/>
            <person name="Lin L."/>
            <person name="Yin J."/>
            <person name="Geng J."/>
            <person name="Li G."/>
            <person name="Shi J."/>
            <person name="Liu J."/>
            <person name="Lv H."/>
            <person name="Li J."/>
            <person name="Wang J."/>
            <person name="Deng Y."/>
            <person name="Ran L."/>
            <person name="Shi X."/>
            <person name="Wang X."/>
            <person name="Wu Q."/>
            <person name="Li C."/>
            <person name="Ren X."/>
            <person name="Wang J."/>
            <person name="Wang X."/>
            <person name="Li D."/>
            <person name="Liu D."/>
            <person name="Zhang X."/>
            <person name="Ji Z."/>
            <person name="Zhao W."/>
            <person name="Sun Y."/>
            <person name="Zhang Z."/>
            <person name="Bao J."/>
            <person name="Han Y."/>
            <person name="Dong L."/>
            <person name="Ji J."/>
            <person name="Chen P."/>
            <person name="Wu S."/>
            <person name="Liu J."/>
            <person name="Xiao Y."/>
            <person name="Bu D."/>
            <person name="Tan J."/>
            <person name="Yang L."/>
            <person name="Ye C."/>
            <person name="Zhang J."/>
            <person name="Xu J."/>
            <person name="Zhou Y."/>
            <person name="Yu Y."/>
            <person name="Zhang B."/>
            <person name="Zhuang S."/>
            <person name="Wei H."/>
            <person name="Liu B."/>
            <person name="Lei M."/>
            <person name="Yu H."/>
            <person name="Li Y."/>
            <person name="Xu H."/>
            <person name="Wei S."/>
            <person name="He X."/>
            <person name="Fang L."/>
            <person name="Zhang Z."/>
            <person name="Zhang Y."/>
            <person name="Huang X."/>
            <person name="Su Z."/>
            <person name="Tong W."/>
            <person name="Li J."/>
            <person name="Tong Z."/>
            <person name="Li S."/>
            <person name="Ye J."/>
            <person name="Wang L."/>
            <person name="Fang L."/>
            <person name="Lei T."/>
            <person name="Chen C.-S."/>
            <person name="Chen H.-C."/>
            <person name="Xu Z."/>
            <person name="Li H."/>
            <person name="Huang H."/>
            <person name="Zhang F."/>
            <person name="Xu H."/>
            <person name="Li N."/>
            <person name="Zhao C."/>
            <person name="Li S."/>
            <person name="Dong L."/>
            <person name="Huang Y."/>
            <person name="Li L."/>
            <person name="Xi Y."/>
            <person name="Qi Q."/>
            <person name="Li W."/>
            <person name="Zhang B."/>
            <person name="Hu W."/>
            <person name="Zhang Y."/>
            <person name="Tian X."/>
            <person name="Jiao Y."/>
            <person name="Liang X."/>
            <person name="Jin J."/>
            <person name="Gao L."/>
            <person name="Zheng W."/>
            <person name="Hao B."/>
            <person name="Liu S.-M."/>
            <person name="Wang W."/>
            <person name="Yuan L."/>
            <person name="Cao M."/>
            <person name="McDermott J."/>
            <person name="Samudrala R."/>
            <person name="Wang J."/>
            <person name="Wong G.K.-S."/>
            <person name="Yang H."/>
        </authorList>
    </citation>
    <scope>NUCLEOTIDE SEQUENCE [LARGE SCALE GENOMIC DNA]</scope>
    <source>
        <strain>cv. Nipponbare</strain>
    </source>
</reference>
<reference key="5">
    <citation type="journal article" date="2003" name="Science">
        <title>Collection, mapping, and annotation of over 28,000 cDNA clones from japonica rice.</title>
        <authorList>
            <consortium name="The rice full-length cDNA consortium"/>
        </authorList>
    </citation>
    <scope>NUCLEOTIDE SEQUENCE [LARGE SCALE MRNA]</scope>
    <source>
        <strain>cv. Nipponbare</strain>
    </source>
</reference>
<feature type="transit peptide" description="Mitochondrion" evidence="1">
    <location>
        <begin position="1"/>
        <end position="18"/>
    </location>
</feature>
<feature type="chain" id="PRO_0000225339" description="Formate dehydrogenase 2, mitochondrial">
    <location>
        <begin position="19"/>
        <end position="378"/>
    </location>
</feature>
<feature type="binding site" evidence="1">
    <location>
        <position position="122"/>
    </location>
    <ligand>
        <name>substrate</name>
    </ligand>
</feature>
<feature type="binding site" evidence="1">
    <location>
        <position position="146"/>
    </location>
    <ligand>
        <name>substrate</name>
    </ligand>
</feature>
<feature type="binding site" evidence="1">
    <location>
        <position position="147"/>
    </location>
    <ligand>
        <name>NAD(+)</name>
        <dbReference type="ChEBI" id="CHEBI:57540"/>
    </ligand>
</feature>
<feature type="binding site" evidence="1">
    <location>
        <begin position="201"/>
        <end position="202"/>
    </location>
    <ligand>
        <name>NAD(+)</name>
        <dbReference type="ChEBI" id="CHEBI:57540"/>
    </ligand>
</feature>
<feature type="binding site" evidence="1">
    <location>
        <position position="221"/>
    </location>
    <ligand>
        <name>NAD(+)</name>
        <dbReference type="ChEBI" id="CHEBI:57540"/>
    </ligand>
</feature>
<feature type="binding site" evidence="1">
    <location>
        <begin position="256"/>
        <end position="260"/>
    </location>
    <ligand>
        <name>NAD(+)</name>
        <dbReference type="ChEBI" id="CHEBI:57540"/>
    </ligand>
</feature>
<feature type="binding site" evidence="1">
    <location>
        <position position="282"/>
    </location>
    <ligand>
        <name>NAD(+)</name>
        <dbReference type="ChEBI" id="CHEBI:57540"/>
    </ligand>
</feature>
<feature type="binding site" evidence="1">
    <location>
        <position position="308"/>
    </location>
    <ligand>
        <name>NAD(+)</name>
        <dbReference type="ChEBI" id="CHEBI:57540"/>
    </ligand>
</feature>
<feature type="binding site" evidence="1">
    <location>
        <begin position="332"/>
        <end position="335"/>
    </location>
    <ligand>
        <name>NAD(+)</name>
        <dbReference type="ChEBI" id="CHEBI:57540"/>
    </ligand>
</feature>
<feature type="site" description="Important for catalytic activity" evidence="1">
    <location>
        <position position="284"/>
    </location>
</feature>
<feature type="site" description="Important for catalytic activity" evidence="1">
    <location>
        <position position="332"/>
    </location>
</feature>
<feature type="sequence conflict" description="In Ref. 5; AK064610." evidence="2" ref="5">
    <original>E</original>
    <variation>K</variation>
    <location>
        <position position="41"/>
    </location>
</feature>
<evidence type="ECO:0000255" key="1">
    <source>
        <dbReference type="HAMAP-Rule" id="MF_03210"/>
    </source>
</evidence>
<evidence type="ECO:0000305" key="2"/>
<evidence type="ECO:0000312" key="3">
    <source>
        <dbReference type="EMBL" id="EAZ37052.1"/>
    </source>
</evidence>
<comment type="function">
    <text evidence="1">Catalyzes the NAD(+)-dependent oxidation of formate to carbon dioxide. Involved in the cell stress response.</text>
</comment>
<comment type="catalytic activity">
    <reaction evidence="1">
        <text>formate + NAD(+) = CO2 + NADH</text>
        <dbReference type="Rhea" id="RHEA:15985"/>
        <dbReference type="ChEBI" id="CHEBI:15740"/>
        <dbReference type="ChEBI" id="CHEBI:16526"/>
        <dbReference type="ChEBI" id="CHEBI:57540"/>
        <dbReference type="ChEBI" id="CHEBI:57945"/>
        <dbReference type="EC" id="1.17.1.9"/>
    </reaction>
</comment>
<comment type="subunit">
    <text evidence="1">Homodimer.</text>
</comment>
<comment type="subcellular location">
    <subcellularLocation>
        <location evidence="1">Mitochondrion</location>
    </subcellularLocation>
</comment>
<comment type="similarity">
    <text evidence="1">Belongs to the D-isomer specific 2-hydroxyacid dehydrogenase family. FDH subfamily.</text>
</comment>